<dbReference type="EMBL" id="AP009240">
    <property type="protein sequence ID" value="BAG76666.1"/>
    <property type="molecule type" value="Genomic_DNA"/>
</dbReference>
<dbReference type="RefSeq" id="WP_001295442.1">
    <property type="nucleotide sequence ID" value="NC_011415.1"/>
</dbReference>
<dbReference type="SMR" id="B6I9F5"/>
<dbReference type="GeneID" id="93776328"/>
<dbReference type="KEGG" id="ecy:ECSE_1142"/>
<dbReference type="HOGENOM" id="CLU_069313_0_0_6"/>
<dbReference type="Proteomes" id="UP000008199">
    <property type="component" value="Chromosome"/>
</dbReference>
<dbReference type="GO" id="GO:0009427">
    <property type="term" value="C:bacterial-type flagellum basal body, distal rod, L ring"/>
    <property type="evidence" value="ECO:0007669"/>
    <property type="project" value="InterPro"/>
</dbReference>
<dbReference type="GO" id="GO:0009279">
    <property type="term" value="C:cell outer membrane"/>
    <property type="evidence" value="ECO:0007669"/>
    <property type="project" value="UniProtKB-SubCell"/>
</dbReference>
<dbReference type="GO" id="GO:0003774">
    <property type="term" value="F:cytoskeletal motor activity"/>
    <property type="evidence" value="ECO:0007669"/>
    <property type="project" value="InterPro"/>
</dbReference>
<dbReference type="GO" id="GO:0071973">
    <property type="term" value="P:bacterial-type flagellum-dependent cell motility"/>
    <property type="evidence" value="ECO:0007669"/>
    <property type="project" value="InterPro"/>
</dbReference>
<dbReference type="HAMAP" id="MF_00415">
    <property type="entry name" value="FlgH"/>
    <property type="match status" value="1"/>
</dbReference>
<dbReference type="InterPro" id="IPR000527">
    <property type="entry name" value="Flag_Lring"/>
</dbReference>
<dbReference type="NCBIfam" id="NF001301">
    <property type="entry name" value="PRK00249.1-1"/>
    <property type="match status" value="1"/>
</dbReference>
<dbReference type="PANTHER" id="PTHR34933">
    <property type="entry name" value="FLAGELLAR L-RING PROTEIN"/>
    <property type="match status" value="1"/>
</dbReference>
<dbReference type="PANTHER" id="PTHR34933:SF3">
    <property type="entry name" value="FLAGELLAR L-RING PROTEIN"/>
    <property type="match status" value="1"/>
</dbReference>
<dbReference type="Pfam" id="PF02107">
    <property type="entry name" value="FlgH"/>
    <property type="match status" value="1"/>
</dbReference>
<dbReference type="PRINTS" id="PR01008">
    <property type="entry name" value="FLGLRINGFLGH"/>
</dbReference>
<dbReference type="PROSITE" id="PS51257">
    <property type="entry name" value="PROKAR_LIPOPROTEIN"/>
    <property type="match status" value="1"/>
</dbReference>
<keyword id="KW-0975">Bacterial flagellum</keyword>
<keyword id="KW-0998">Cell outer membrane</keyword>
<keyword id="KW-0449">Lipoprotein</keyword>
<keyword id="KW-0472">Membrane</keyword>
<keyword id="KW-0564">Palmitate</keyword>
<keyword id="KW-0732">Signal</keyword>
<comment type="function">
    <text evidence="1">Assembles around the rod to form the L-ring and probably protects the motor/basal body from shearing forces during rotation.</text>
</comment>
<comment type="subunit">
    <text evidence="1">The basal body constitutes a major portion of the flagellar organelle and consists of four rings (L,P,S, and M) mounted on a central rod.</text>
</comment>
<comment type="subcellular location">
    <subcellularLocation>
        <location evidence="1">Cell outer membrane</location>
        <topology evidence="1">Lipid-anchor</topology>
    </subcellularLocation>
    <subcellularLocation>
        <location evidence="1">Bacterial flagellum basal body</location>
    </subcellularLocation>
</comment>
<comment type="similarity">
    <text evidence="1">Belongs to the FlgH family.</text>
</comment>
<reference key="1">
    <citation type="journal article" date="2008" name="DNA Res.">
        <title>Complete genome sequence and comparative analysis of the wild-type commensal Escherichia coli strain SE11 isolated from a healthy adult.</title>
        <authorList>
            <person name="Oshima K."/>
            <person name="Toh H."/>
            <person name="Ogura Y."/>
            <person name="Sasamoto H."/>
            <person name="Morita H."/>
            <person name="Park S.-H."/>
            <person name="Ooka T."/>
            <person name="Iyoda S."/>
            <person name="Taylor T.D."/>
            <person name="Hayashi T."/>
            <person name="Itoh K."/>
            <person name="Hattori M."/>
        </authorList>
    </citation>
    <scope>NUCLEOTIDE SEQUENCE [LARGE SCALE GENOMIC DNA]</scope>
    <source>
        <strain>SE11</strain>
    </source>
</reference>
<proteinExistence type="inferred from homology"/>
<feature type="signal peptide" evidence="1">
    <location>
        <begin position="1"/>
        <end position="21"/>
    </location>
</feature>
<feature type="chain" id="PRO_1000123949" description="Flagellar L-ring protein">
    <location>
        <begin position="22"/>
        <end position="232"/>
    </location>
</feature>
<feature type="lipid moiety-binding region" description="N-palmitoyl cysteine" evidence="1">
    <location>
        <position position="22"/>
    </location>
</feature>
<feature type="lipid moiety-binding region" description="S-diacylglycerol cysteine" evidence="1">
    <location>
        <position position="22"/>
    </location>
</feature>
<name>FLGH_ECOSE</name>
<protein>
    <recommendedName>
        <fullName evidence="1">Flagellar L-ring protein</fullName>
    </recommendedName>
    <alternativeName>
        <fullName evidence="1">Basal body L-ring protein</fullName>
    </alternativeName>
</protein>
<accession>B6I9F5</accession>
<gene>
    <name evidence="1" type="primary">flgH</name>
    <name type="ordered locus">ECSE_1142</name>
</gene>
<organism>
    <name type="scientific">Escherichia coli (strain SE11)</name>
    <dbReference type="NCBI Taxonomy" id="409438"/>
    <lineage>
        <taxon>Bacteria</taxon>
        <taxon>Pseudomonadati</taxon>
        <taxon>Pseudomonadota</taxon>
        <taxon>Gammaproteobacteria</taxon>
        <taxon>Enterobacterales</taxon>
        <taxon>Enterobacteriaceae</taxon>
        <taxon>Escherichia</taxon>
    </lineage>
</organism>
<sequence length="232" mass="24615">MQKNAAHTYAISSLLVLSLTGCAWIPSTPLVQGATSAQPVPGPTPVANGSIFQSAQPINYGYQPLFEDRRPRNIGDTLTIVLQENVSASKSSSANASRDGKTNFGFDTVPRYLQGLFGNARADVEASGGNTFNGKGGANASNTFSGTLTVTVDQVLVNGNLHVVGEKQIAINQGTEFIRFSGVVNPRTISGSNTVPSTQVADARIEYVGNGYINEAQNMGWLQRFFLNLSPM</sequence>
<evidence type="ECO:0000255" key="1">
    <source>
        <dbReference type="HAMAP-Rule" id="MF_00415"/>
    </source>
</evidence>